<keyword id="KW-0378">Hydrolase</keyword>
<keyword id="KW-0464">Manganese</keyword>
<keyword id="KW-0479">Metal-binding</keyword>
<keyword id="KW-0620">Polyamine biosynthesis</keyword>
<keyword id="KW-0661">Putrescine biosynthesis</keyword>
<keyword id="KW-0745">Spermidine biosynthesis</keyword>
<gene>
    <name evidence="1" type="primary">speB</name>
    <name type="ordered locus">SBO_3052</name>
</gene>
<proteinExistence type="inferred from homology"/>
<accession>Q31WK0</accession>
<sequence>MSTLGHQYDNSLVSNAFGFLRLPMNFQPYDSDADWVITGVPFDMATSGRAGGRHGPAAIRQVSTNLAWEHNRFPWNFDMRERLNVVDCGDLVYAFGDAREMSEKLQAHAEKLLAAGKRMLSFGGDHFVTLPLLRAHAKHFGKMALVHFDAHTDTYANGCEFDHGTMFYTAPKEGLIDPNHSVQIGIRTEFDKDNGFTVLDACQVNDRSVDDVIAQVKQIVGDMPVYLTFDIDCLDPAFAPGTGTPVIGGLTSDRAIKLVRGLKDLNIVGMDVVEVAPAYDQSEITALAAATLALEMLYIQAAKKGE</sequence>
<name>SPEB_SHIBS</name>
<organism>
    <name type="scientific">Shigella boydii serotype 4 (strain Sb227)</name>
    <dbReference type="NCBI Taxonomy" id="300268"/>
    <lineage>
        <taxon>Bacteria</taxon>
        <taxon>Pseudomonadati</taxon>
        <taxon>Pseudomonadota</taxon>
        <taxon>Gammaproteobacteria</taxon>
        <taxon>Enterobacterales</taxon>
        <taxon>Enterobacteriaceae</taxon>
        <taxon>Shigella</taxon>
    </lineage>
</organism>
<protein>
    <recommendedName>
        <fullName evidence="1">Agmatinase</fullName>
        <ecNumber evidence="1">3.5.3.11</ecNumber>
    </recommendedName>
    <alternativeName>
        <fullName evidence="1">Agmatine ureohydrolase</fullName>
        <shortName evidence="1">AUH</shortName>
    </alternativeName>
</protein>
<comment type="function">
    <text evidence="1">Catalyzes the formation of putrescine from agmatine.</text>
</comment>
<comment type="catalytic activity">
    <reaction evidence="1">
        <text>agmatine + H2O = urea + putrescine</text>
        <dbReference type="Rhea" id="RHEA:13929"/>
        <dbReference type="ChEBI" id="CHEBI:15377"/>
        <dbReference type="ChEBI" id="CHEBI:16199"/>
        <dbReference type="ChEBI" id="CHEBI:58145"/>
        <dbReference type="ChEBI" id="CHEBI:326268"/>
        <dbReference type="EC" id="3.5.3.11"/>
    </reaction>
</comment>
<comment type="cofactor">
    <cofactor evidence="1">
        <name>Mn(2+)</name>
        <dbReference type="ChEBI" id="CHEBI:29035"/>
    </cofactor>
</comment>
<comment type="pathway">
    <text evidence="1">Amine and polyamine biosynthesis; putrescine biosynthesis via agmatine pathway; putrescine from agmatine: step 1/1.</text>
</comment>
<comment type="similarity">
    <text evidence="1">Belongs to the arginase family. Agmatinase subfamily.</text>
</comment>
<feature type="chain" id="PRO_1000024284" description="Agmatinase">
    <location>
        <begin position="1"/>
        <end position="306"/>
    </location>
</feature>
<feature type="binding site" evidence="1">
    <location>
        <position position="126"/>
    </location>
    <ligand>
        <name>Mn(2+)</name>
        <dbReference type="ChEBI" id="CHEBI:29035"/>
    </ligand>
</feature>
<feature type="binding site" evidence="1">
    <location>
        <position position="149"/>
    </location>
    <ligand>
        <name>Mn(2+)</name>
        <dbReference type="ChEBI" id="CHEBI:29035"/>
    </ligand>
</feature>
<feature type="binding site" evidence="1">
    <location>
        <position position="151"/>
    </location>
    <ligand>
        <name>Mn(2+)</name>
        <dbReference type="ChEBI" id="CHEBI:29035"/>
    </ligand>
</feature>
<feature type="binding site" evidence="1">
    <location>
        <position position="153"/>
    </location>
    <ligand>
        <name>Mn(2+)</name>
        <dbReference type="ChEBI" id="CHEBI:29035"/>
    </ligand>
</feature>
<feature type="binding site" evidence="1">
    <location>
        <position position="230"/>
    </location>
    <ligand>
        <name>Mn(2+)</name>
        <dbReference type="ChEBI" id="CHEBI:29035"/>
    </ligand>
</feature>
<feature type="binding site" evidence="1">
    <location>
        <position position="232"/>
    </location>
    <ligand>
        <name>Mn(2+)</name>
        <dbReference type="ChEBI" id="CHEBI:29035"/>
    </ligand>
</feature>
<evidence type="ECO:0000255" key="1">
    <source>
        <dbReference type="HAMAP-Rule" id="MF_01418"/>
    </source>
</evidence>
<dbReference type="EC" id="3.5.3.11" evidence="1"/>
<dbReference type="EMBL" id="CP000036">
    <property type="protein sequence ID" value="ABB67558.1"/>
    <property type="molecule type" value="Genomic_DNA"/>
</dbReference>
<dbReference type="RefSeq" id="WP_000105566.1">
    <property type="nucleotide sequence ID" value="NC_007613.1"/>
</dbReference>
<dbReference type="SMR" id="Q31WK0"/>
<dbReference type="GeneID" id="89517749"/>
<dbReference type="KEGG" id="sbo:SBO_3052"/>
<dbReference type="HOGENOM" id="CLU_039478_0_0_6"/>
<dbReference type="UniPathway" id="UPA00534">
    <property type="reaction ID" value="UER00287"/>
</dbReference>
<dbReference type="Proteomes" id="UP000007067">
    <property type="component" value="Chromosome"/>
</dbReference>
<dbReference type="GO" id="GO:0008783">
    <property type="term" value="F:agmatinase activity"/>
    <property type="evidence" value="ECO:0007669"/>
    <property type="project" value="UniProtKB-UniRule"/>
</dbReference>
<dbReference type="GO" id="GO:0030145">
    <property type="term" value="F:manganese ion binding"/>
    <property type="evidence" value="ECO:0007669"/>
    <property type="project" value="InterPro"/>
</dbReference>
<dbReference type="GO" id="GO:0033389">
    <property type="term" value="P:putrescine biosynthetic process from arginine, via agmatine"/>
    <property type="evidence" value="ECO:0007669"/>
    <property type="project" value="TreeGrafter"/>
</dbReference>
<dbReference type="GO" id="GO:0008295">
    <property type="term" value="P:spermidine biosynthetic process"/>
    <property type="evidence" value="ECO:0007669"/>
    <property type="project" value="UniProtKB-UniRule"/>
</dbReference>
<dbReference type="CDD" id="cd11592">
    <property type="entry name" value="Agmatinase_PAH"/>
    <property type="match status" value="1"/>
</dbReference>
<dbReference type="FunFam" id="3.40.800.10:FF:000001">
    <property type="entry name" value="Agmatinase"/>
    <property type="match status" value="1"/>
</dbReference>
<dbReference type="Gene3D" id="3.40.800.10">
    <property type="entry name" value="Ureohydrolase domain"/>
    <property type="match status" value="1"/>
</dbReference>
<dbReference type="HAMAP" id="MF_01418">
    <property type="entry name" value="SpeB"/>
    <property type="match status" value="1"/>
</dbReference>
<dbReference type="InterPro" id="IPR023694">
    <property type="entry name" value="Agmatinase"/>
</dbReference>
<dbReference type="InterPro" id="IPR005925">
    <property type="entry name" value="Agmatinase-rel"/>
</dbReference>
<dbReference type="InterPro" id="IPR006035">
    <property type="entry name" value="Ureohydrolase"/>
</dbReference>
<dbReference type="InterPro" id="IPR023696">
    <property type="entry name" value="Ureohydrolase_dom_sf"/>
</dbReference>
<dbReference type="InterPro" id="IPR020855">
    <property type="entry name" value="Ureohydrolase_Mn_BS"/>
</dbReference>
<dbReference type="NCBIfam" id="TIGR01230">
    <property type="entry name" value="agmatinase"/>
    <property type="match status" value="1"/>
</dbReference>
<dbReference type="NCBIfam" id="NF002564">
    <property type="entry name" value="PRK02190.1"/>
    <property type="match status" value="1"/>
</dbReference>
<dbReference type="PANTHER" id="PTHR11358">
    <property type="entry name" value="ARGINASE/AGMATINASE"/>
    <property type="match status" value="1"/>
</dbReference>
<dbReference type="PANTHER" id="PTHR11358:SF26">
    <property type="entry name" value="GUANIDINO ACID HYDROLASE, MITOCHONDRIAL"/>
    <property type="match status" value="1"/>
</dbReference>
<dbReference type="Pfam" id="PF00491">
    <property type="entry name" value="Arginase"/>
    <property type="match status" value="1"/>
</dbReference>
<dbReference type="PIRSF" id="PIRSF036979">
    <property type="entry name" value="Arginase"/>
    <property type="match status" value="1"/>
</dbReference>
<dbReference type="SUPFAM" id="SSF52768">
    <property type="entry name" value="Arginase/deacetylase"/>
    <property type="match status" value="1"/>
</dbReference>
<dbReference type="PROSITE" id="PS01053">
    <property type="entry name" value="ARGINASE_1"/>
    <property type="match status" value="1"/>
</dbReference>
<dbReference type="PROSITE" id="PS51409">
    <property type="entry name" value="ARGINASE_2"/>
    <property type="match status" value="1"/>
</dbReference>
<reference key="1">
    <citation type="journal article" date="2005" name="Nucleic Acids Res.">
        <title>Genome dynamics and diversity of Shigella species, the etiologic agents of bacillary dysentery.</title>
        <authorList>
            <person name="Yang F."/>
            <person name="Yang J."/>
            <person name="Zhang X."/>
            <person name="Chen L."/>
            <person name="Jiang Y."/>
            <person name="Yan Y."/>
            <person name="Tang X."/>
            <person name="Wang J."/>
            <person name="Xiong Z."/>
            <person name="Dong J."/>
            <person name="Xue Y."/>
            <person name="Zhu Y."/>
            <person name="Xu X."/>
            <person name="Sun L."/>
            <person name="Chen S."/>
            <person name="Nie H."/>
            <person name="Peng J."/>
            <person name="Xu J."/>
            <person name="Wang Y."/>
            <person name="Yuan Z."/>
            <person name="Wen Y."/>
            <person name="Yao Z."/>
            <person name="Shen Y."/>
            <person name="Qiang B."/>
            <person name="Hou Y."/>
            <person name="Yu J."/>
            <person name="Jin Q."/>
        </authorList>
    </citation>
    <scope>NUCLEOTIDE SEQUENCE [LARGE SCALE GENOMIC DNA]</scope>
    <source>
        <strain>Sb227</strain>
    </source>
</reference>